<organism>
    <name type="scientific">Psychromonas ingrahamii (strain DSM 17664 / CCUG 51855 / 37)</name>
    <dbReference type="NCBI Taxonomy" id="357804"/>
    <lineage>
        <taxon>Bacteria</taxon>
        <taxon>Pseudomonadati</taxon>
        <taxon>Pseudomonadota</taxon>
        <taxon>Gammaproteobacteria</taxon>
        <taxon>Alteromonadales</taxon>
        <taxon>Psychromonadaceae</taxon>
        <taxon>Psychromonas</taxon>
    </lineage>
</organism>
<protein>
    <recommendedName>
        <fullName evidence="1">Nicotinate phosphoribosyltransferase</fullName>
        <shortName evidence="1">NAPRTase</shortName>
        <ecNumber evidence="1">6.3.4.21</ecNumber>
    </recommendedName>
</protein>
<comment type="function">
    <text evidence="1">Catalyzes the synthesis of beta-nicotinate D-ribonucleotide from nicotinate and 5-phospho-D-ribose 1-phosphate at the expense of ATP.</text>
</comment>
<comment type="catalytic activity">
    <reaction evidence="1">
        <text>nicotinate + 5-phospho-alpha-D-ribose 1-diphosphate + ATP + H2O = nicotinate beta-D-ribonucleotide + ADP + phosphate + diphosphate</text>
        <dbReference type="Rhea" id="RHEA:36163"/>
        <dbReference type="ChEBI" id="CHEBI:15377"/>
        <dbReference type="ChEBI" id="CHEBI:30616"/>
        <dbReference type="ChEBI" id="CHEBI:32544"/>
        <dbReference type="ChEBI" id="CHEBI:33019"/>
        <dbReference type="ChEBI" id="CHEBI:43474"/>
        <dbReference type="ChEBI" id="CHEBI:57502"/>
        <dbReference type="ChEBI" id="CHEBI:58017"/>
        <dbReference type="ChEBI" id="CHEBI:456216"/>
        <dbReference type="EC" id="6.3.4.21"/>
    </reaction>
</comment>
<comment type="pathway">
    <text evidence="1">Cofactor biosynthesis; NAD(+) biosynthesis; nicotinate D-ribonucleotide from nicotinate: step 1/1.</text>
</comment>
<comment type="PTM">
    <text evidence="1">Transiently phosphorylated on a His residue during the reaction cycle. Phosphorylation strongly increases the affinity for substrates and increases the rate of nicotinate D-ribonucleotide production. Dephosphorylation regenerates the low-affinity form of the enzyme, leading to product release.</text>
</comment>
<comment type="similarity">
    <text evidence="1">Belongs to the NAPRTase family.</text>
</comment>
<proteinExistence type="inferred from homology"/>
<sequence length="406" mass="46300">MSIKKLDYWLIESLMDTDLYKITMLQAYYHAPEFRLVDIEWKFACRNRNGLDLSILIPEIFRQLEHLCTLSFSDAELDYLAGFSFIKPDFIEFLRIFRLDMRFVHIEAKGEDISLRFSGPLLHVSLLEIYTLAIISELHTFVNCGGIDLKVARERLAEKIAYLKAEDDLSGFSFADFGTRRRASKAWHEEVLLTLKEQLPASFSGTSSLHFARTLGLPPIGTMAHEWFQSWQAVTRLADAQKAALEGWVQEYRGRLGIALTDCYSMDSFIRDFSDPYFGKLYDGLRHDSGCPFVWAEKAILMYQQMGIDPLSKTLVFSDGLNFPRMLEIWKRFKGRAKISFGIGTNLTNDVGNVPLNIVIKMIAANGRPIAKISDEPGKSMCEDLGYLQYLASQYGIDPSLVKISQ</sequence>
<keyword id="KW-0436">Ligase</keyword>
<keyword id="KW-0597">Phosphoprotein</keyword>
<keyword id="KW-0662">Pyridine nucleotide biosynthesis</keyword>
<keyword id="KW-1185">Reference proteome</keyword>
<gene>
    <name evidence="1" type="primary">pncB</name>
    <name type="ordered locus">Ping_1730</name>
</gene>
<feature type="chain" id="PRO_1000212087" description="Nicotinate phosphoribosyltransferase">
    <location>
        <begin position="1"/>
        <end position="406"/>
    </location>
</feature>
<feature type="modified residue" description="Phosphohistidine; by autocatalysis" evidence="1">
    <location>
        <position position="225"/>
    </location>
</feature>
<reference key="1">
    <citation type="journal article" date="2008" name="BMC Genomics">
        <title>Genomics of an extreme psychrophile, Psychromonas ingrahamii.</title>
        <authorList>
            <person name="Riley M."/>
            <person name="Staley J.T."/>
            <person name="Danchin A."/>
            <person name="Wang T.Z."/>
            <person name="Brettin T.S."/>
            <person name="Hauser L.J."/>
            <person name="Land M.L."/>
            <person name="Thompson L.S."/>
        </authorList>
    </citation>
    <scope>NUCLEOTIDE SEQUENCE [LARGE SCALE GENOMIC DNA]</scope>
    <source>
        <strain>DSM 17664 / CCUG 51855 / 37</strain>
    </source>
</reference>
<name>PNCB_PSYIN</name>
<dbReference type="EC" id="6.3.4.21" evidence="1"/>
<dbReference type="EMBL" id="CP000510">
    <property type="protein sequence ID" value="ABM03514.1"/>
    <property type="molecule type" value="Genomic_DNA"/>
</dbReference>
<dbReference type="RefSeq" id="WP_011770074.1">
    <property type="nucleotide sequence ID" value="NC_008709.1"/>
</dbReference>
<dbReference type="SMR" id="A1SVJ9"/>
<dbReference type="STRING" id="357804.Ping_1730"/>
<dbReference type="KEGG" id="pin:Ping_1730"/>
<dbReference type="eggNOG" id="COG1488">
    <property type="taxonomic scope" value="Bacteria"/>
</dbReference>
<dbReference type="HOGENOM" id="CLU_030991_1_0_6"/>
<dbReference type="OrthoDB" id="9771406at2"/>
<dbReference type="UniPathway" id="UPA00253">
    <property type="reaction ID" value="UER00457"/>
</dbReference>
<dbReference type="Proteomes" id="UP000000639">
    <property type="component" value="Chromosome"/>
</dbReference>
<dbReference type="GO" id="GO:0005829">
    <property type="term" value="C:cytosol"/>
    <property type="evidence" value="ECO:0007669"/>
    <property type="project" value="TreeGrafter"/>
</dbReference>
<dbReference type="GO" id="GO:0004516">
    <property type="term" value="F:nicotinate phosphoribosyltransferase activity"/>
    <property type="evidence" value="ECO:0007669"/>
    <property type="project" value="UniProtKB-UniRule"/>
</dbReference>
<dbReference type="GO" id="GO:0034355">
    <property type="term" value="P:NAD biosynthetic process via the salvage pathway"/>
    <property type="evidence" value="ECO:0007669"/>
    <property type="project" value="TreeGrafter"/>
</dbReference>
<dbReference type="Gene3D" id="3.20.140.10">
    <property type="entry name" value="nicotinate phosphoribosyltransferase"/>
    <property type="match status" value="1"/>
</dbReference>
<dbReference type="HAMAP" id="MF_00570">
    <property type="entry name" value="NAPRTase"/>
    <property type="match status" value="1"/>
</dbReference>
<dbReference type="InterPro" id="IPR041525">
    <property type="entry name" value="N/Namide_PRibTrfase"/>
</dbReference>
<dbReference type="InterPro" id="IPR040727">
    <property type="entry name" value="NAPRTase_N"/>
</dbReference>
<dbReference type="InterPro" id="IPR006406">
    <property type="entry name" value="Nic_PRibTrfase"/>
</dbReference>
<dbReference type="InterPro" id="IPR007229">
    <property type="entry name" value="Nic_PRibTrfase-Fam"/>
</dbReference>
<dbReference type="InterPro" id="IPR036068">
    <property type="entry name" value="Nicotinate_pribotase-like_C"/>
</dbReference>
<dbReference type="NCBIfam" id="TIGR01514">
    <property type="entry name" value="NAPRTase"/>
    <property type="match status" value="1"/>
</dbReference>
<dbReference type="NCBIfam" id="NF003704">
    <property type="entry name" value="PRK05321.1"/>
    <property type="match status" value="1"/>
</dbReference>
<dbReference type="PANTHER" id="PTHR11098">
    <property type="entry name" value="NICOTINATE PHOSPHORIBOSYLTRANSFERASE"/>
    <property type="match status" value="1"/>
</dbReference>
<dbReference type="PANTHER" id="PTHR11098:SF1">
    <property type="entry name" value="NICOTINATE PHOSPHORIBOSYLTRANSFERASE"/>
    <property type="match status" value="1"/>
</dbReference>
<dbReference type="Pfam" id="PF04095">
    <property type="entry name" value="NAPRTase"/>
    <property type="match status" value="1"/>
</dbReference>
<dbReference type="Pfam" id="PF17767">
    <property type="entry name" value="NAPRTase_N"/>
    <property type="match status" value="1"/>
</dbReference>
<dbReference type="PIRSF" id="PIRSF000484">
    <property type="entry name" value="NAPRT"/>
    <property type="match status" value="1"/>
</dbReference>
<dbReference type="SUPFAM" id="SSF51690">
    <property type="entry name" value="Nicotinate/Quinolinate PRTase C-terminal domain-like"/>
    <property type="match status" value="1"/>
</dbReference>
<dbReference type="SUPFAM" id="SSF54675">
    <property type="entry name" value="Nicotinate/Quinolinate PRTase N-terminal domain-like"/>
    <property type="match status" value="1"/>
</dbReference>
<evidence type="ECO:0000255" key="1">
    <source>
        <dbReference type="HAMAP-Rule" id="MF_00570"/>
    </source>
</evidence>
<accession>A1SVJ9</accession>